<comment type="function">
    <text evidence="3">Odorant receptor.</text>
</comment>
<comment type="subcellular location">
    <subcellularLocation>
        <location>Cell membrane</location>
        <topology>Multi-pass membrane protein</topology>
    </subcellularLocation>
</comment>
<comment type="similarity">
    <text evidence="2">Belongs to the G-protein coupled receptor 1 family.</text>
</comment>
<comment type="sequence caution" evidence="3">
    <conflict type="erroneous initiation">
        <sequence resource="EMBL-CDS" id="DAA04687"/>
    </conflict>
</comment>
<comment type="online information" name="Human Olfactory Receptor Data Exploratorium (HORDE)">
    <link uri="http://genome.weizmann.ac.il/horde/card/index/symbol:OR6B3"/>
</comment>
<protein>
    <recommendedName>
        <fullName>Olfactory receptor 6B3</fullName>
    </recommendedName>
    <alternativeName>
        <fullName>Olfactory receptor OR2-2</fullName>
    </alternativeName>
</protein>
<evidence type="ECO:0000255" key="1"/>
<evidence type="ECO:0000255" key="2">
    <source>
        <dbReference type="PROSITE-ProRule" id="PRU00521"/>
    </source>
</evidence>
<evidence type="ECO:0000305" key="3"/>
<gene>
    <name type="primary">OR6B3</name>
    <name type="synonym">OR6B3P</name>
</gene>
<organism>
    <name type="scientific">Homo sapiens</name>
    <name type="common">Human</name>
    <dbReference type="NCBI Taxonomy" id="9606"/>
    <lineage>
        <taxon>Eukaryota</taxon>
        <taxon>Metazoa</taxon>
        <taxon>Chordata</taxon>
        <taxon>Craniata</taxon>
        <taxon>Vertebrata</taxon>
        <taxon>Euteleostomi</taxon>
        <taxon>Mammalia</taxon>
        <taxon>Eutheria</taxon>
        <taxon>Euarchontoglires</taxon>
        <taxon>Primates</taxon>
        <taxon>Haplorrhini</taxon>
        <taxon>Catarrhini</taxon>
        <taxon>Hominidae</taxon>
        <taxon>Homo</taxon>
    </lineage>
</organism>
<reference key="1">
    <citation type="submission" date="2001-07" db="EMBL/GenBank/DDBJ databases">
        <title>Genome-wide discovery and analysis of human seven transmembrane helix receptor genes.</title>
        <authorList>
            <person name="Suwa M."/>
            <person name="Sato T."/>
            <person name="Okouchi I."/>
            <person name="Arita M."/>
            <person name="Futami K."/>
            <person name="Matsumoto S."/>
            <person name="Tsutsumi S."/>
            <person name="Aburatani H."/>
            <person name="Asai K."/>
            <person name="Akiyama Y."/>
        </authorList>
    </citation>
    <scope>NUCLEOTIDE SEQUENCE [GENOMIC DNA]</scope>
</reference>
<reference key="2">
    <citation type="journal article" date="2004" name="Proc. Natl. Acad. Sci. U.S.A.">
        <title>The human olfactory receptor gene family.</title>
        <authorList>
            <person name="Malnic B."/>
            <person name="Godfrey P.A."/>
            <person name="Buck L.B."/>
        </authorList>
    </citation>
    <scope>IDENTIFICATION</scope>
</reference>
<reference key="3">
    <citation type="journal article" date="2004" name="Proc. Natl. Acad. Sci. U.S.A.">
        <authorList>
            <person name="Malnic B."/>
            <person name="Godfrey P.A."/>
            <person name="Buck L.B."/>
        </authorList>
    </citation>
    <scope>ERRATUM OF PUBMED:14983052</scope>
</reference>
<sequence length="331" mass="37232">MSGENVTRVGTFILVGFPTAPGLQYLLFLLFLLTYLFVLVENLAIILTVWSSTSLHRPMYYFLSSMSFLEIWYVSDITPKMLEGFLLQQKRISFVGCMTQLYFFSSLVCTECVLLASMAYDRYVAICHPLRYHVLVTPGLCLQLVGFSFVSGFTISMIKVCFISSVTFCGSNVLNHFFCDISPILKLACTDFSTAELVDFILAFIILVFPLLATMLSYAHITLAVLRIPSATGCWRAFFTCASHLTVVTVFYTALLFMYVRPQAIDSRSSNKLISVLYTVITPILNPLIYCLRNKEFKNALKKAFGLTSCAVEGRLSSLLELHLQIHSQPL</sequence>
<dbReference type="EMBL" id="AB065662">
    <property type="protein sequence ID" value="BAC05888.1"/>
    <property type="molecule type" value="Genomic_DNA"/>
</dbReference>
<dbReference type="EMBL" id="BK004289">
    <property type="protein sequence ID" value="DAA04687.1"/>
    <property type="status" value="ALT_INIT"/>
    <property type="molecule type" value="Genomic_DNA"/>
</dbReference>
<dbReference type="CCDS" id="CCDS42837.1"/>
<dbReference type="RefSeq" id="NP_775486.1">
    <property type="nucleotide sequence ID" value="NM_173351.2"/>
</dbReference>
<dbReference type="SMR" id="Q8NGW1"/>
<dbReference type="BioGRID" id="127316">
    <property type="interactions" value="3"/>
</dbReference>
<dbReference type="FunCoup" id="Q8NGW1">
    <property type="interactions" value="419"/>
</dbReference>
<dbReference type="IntAct" id="Q8NGW1">
    <property type="interactions" value="1"/>
</dbReference>
<dbReference type="STRING" id="9606.ENSP00000493035"/>
<dbReference type="GlyCosmos" id="Q8NGW1">
    <property type="glycosylation" value="1 site, No reported glycans"/>
</dbReference>
<dbReference type="GlyGen" id="Q8NGW1">
    <property type="glycosylation" value="2 sites"/>
</dbReference>
<dbReference type="PhosphoSitePlus" id="Q8NGW1"/>
<dbReference type="BioMuta" id="OR6B3"/>
<dbReference type="DMDM" id="38258179"/>
<dbReference type="MassIVE" id="Q8NGW1"/>
<dbReference type="PaxDb" id="9606-ENSP00000322435"/>
<dbReference type="PeptideAtlas" id="Q8NGW1"/>
<dbReference type="Antibodypedia" id="66158">
    <property type="antibodies" value="26 antibodies from 15 providers"/>
</dbReference>
<dbReference type="DNASU" id="150681"/>
<dbReference type="Ensembl" id="ENST00000641019.2">
    <property type="protein sequence ID" value="ENSP00000493035.1"/>
    <property type="gene ID" value="ENSG00000178586.7"/>
</dbReference>
<dbReference type="GeneID" id="150681"/>
<dbReference type="KEGG" id="hsa:150681"/>
<dbReference type="MANE-Select" id="ENST00000641019.2">
    <property type="protein sequence ID" value="ENSP00000493035.1"/>
    <property type="RefSeq nucleotide sequence ID" value="NM_173351.2"/>
    <property type="RefSeq protein sequence ID" value="NP_775486.1"/>
</dbReference>
<dbReference type="UCSC" id="uc010zoe.2">
    <property type="organism name" value="human"/>
</dbReference>
<dbReference type="AGR" id="HGNC:15042"/>
<dbReference type="CTD" id="150681"/>
<dbReference type="GeneCards" id="OR6B3"/>
<dbReference type="HGNC" id="HGNC:15042">
    <property type="gene designation" value="OR6B3"/>
</dbReference>
<dbReference type="HPA" id="ENSG00000178586">
    <property type="expression patterns" value="Tissue enriched (retina)"/>
</dbReference>
<dbReference type="neXtProt" id="NX_Q8NGW1"/>
<dbReference type="OpenTargets" id="ENSG00000178586"/>
<dbReference type="PharmGKB" id="PA32578"/>
<dbReference type="VEuPathDB" id="HostDB:ENSG00000178586"/>
<dbReference type="eggNOG" id="ENOG502SJJZ">
    <property type="taxonomic scope" value="Eukaryota"/>
</dbReference>
<dbReference type="GeneTree" id="ENSGT01090000260045"/>
<dbReference type="HOGENOM" id="CLU_012526_1_0_1"/>
<dbReference type="InParanoid" id="Q8NGW1"/>
<dbReference type="OMA" id="WANTSLH"/>
<dbReference type="OrthoDB" id="9447100at2759"/>
<dbReference type="PAN-GO" id="Q8NGW1">
    <property type="GO annotations" value="2 GO annotations based on evolutionary models"/>
</dbReference>
<dbReference type="PhylomeDB" id="Q8NGW1"/>
<dbReference type="TreeFam" id="TF337475"/>
<dbReference type="PathwayCommons" id="Q8NGW1"/>
<dbReference type="Reactome" id="R-HSA-9752946">
    <property type="pathway name" value="Expression and translocation of olfactory receptors"/>
</dbReference>
<dbReference type="SignaLink" id="Q8NGW1"/>
<dbReference type="BioGRID-ORCS" id="150681">
    <property type="hits" value="8 hits in 742 CRISPR screens"/>
</dbReference>
<dbReference type="GeneWiki" id="OR6B3"/>
<dbReference type="GenomeRNAi" id="150681"/>
<dbReference type="Pharos" id="Q8NGW1">
    <property type="development level" value="Tdark"/>
</dbReference>
<dbReference type="PRO" id="PR:Q8NGW1"/>
<dbReference type="Proteomes" id="UP000005640">
    <property type="component" value="Chromosome 2"/>
</dbReference>
<dbReference type="RNAct" id="Q8NGW1">
    <property type="molecule type" value="protein"/>
</dbReference>
<dbReference type="Bgee" id="ENSG00000178586">
    <property type="expression patterns" value="Expressed in male germ line stem cell (sensu Vertebrata) in testis and 31 other cell types or tissues"/>
</dbReference>
<dbReference type="ExpressionAtlas" id="Q8NGW1">
    <property type="expression patterns" value="baseline and differential"/>
</dbReference>
<dbReference type="GO" id="GO:0005829">
    <property type="term" value="C:cytosol"/>
    <property type="evidence" value="ECO:0000314"/>
    <property type="project" value="HPA"/>
</dbReference>
<dbReference type="GO" id="GO:0005886">
    <property type="term" value="C:plasma membrane"/>
    <property type="evidence" value="ECO:0000314"/>
    <property type="project" value="HPA"/>
</dbReference>
<dbReference type="GO" id="GO:0004930">
    <property type="term" value="F:G protein-coupled receptor activity"/>
    <property type="evidence" value="ECO:0007669"/>
    <property type="project" value="UniProtKB-KW"/>
</dbReference>
<dbReference type="GO" id="GO:0005549">
    <property type="term" value="F:odorant binding"/>
    <property type="evidence" value="ECO:0000318"/>
    <property type="project" value="GO_Central"/>
</dbReference>
<dbReference type="GO" id="GO:0004984">
    <property type="term" value="F:olfactory receptor activity"/>
    <property type="evidence" value="ECO:0000318"/>
    <property type="project" value="GO_Central"/>
</dbReference>
<dbReference type="CDD" id="cd15224">
    <property type="entry name" value="7tmA_OR6B-like"/>
    <property type="match status" value="1"/>
</dbReference>
<dbReference type="FunFam" id="1.20.1070.10:FF:000001">
    <property type="entry name" value="Olfactory receptor"/>
    <property type="match status" value="1"/>
</dbReference>
<dbReference type="Gene3D" id="1.20.1070.10">
    <property type="entry name" value="Rhodopsin 7-helix transmembrane proteins"/>
    <property type="match status" value="1"/>
</dbReference>
<dbReference type="InterPro" id="IPR000276">
    <property type="entry name" value="GPCR_Rhodpsn"/>
</dbReference>
<dbReference type="InterPro" id="IPR017452">
    <property type="entry name" value="GPCR_Rhodpsn_7TM"/>
</dbReference>
<dbReference type="InterPro" id="IPR000725">
    <property type="entry name" value="Olfact_rcpt"/>
</dbReference>
<dbReference type="InterPro" id="IPR050516">
    <property type="entry name" value="Olfactory_GPCR"/>
</dbReference>
<dbReference type="PANTHER" id="PTHR26452">
    <property type="entry name" value="OLFACTORY RECEPTOR"/>
    <property type="match status" value="1"/>
</dbReference>
<dbReference type="Pfam" id="PF13853">
    <property type="entry name" value="7tm_4"/>
    <property type="match status" value="1"/>
</dbReference>
<dbReference type="PRINTS" id="PR00237">
    <property type="entry name" value="GPCRRHODOPSN"/>
</dbReference>
<dbReference type="PRINTS" id="PR00245">
    <property type="entry name" value="OLFACTORYR"/>
</dbReference>
<dbReference type="SUPFAM" id="SSF81321">
    <property type="entry name" value="Family A G protein-coupled receptor-like"/>
    <property type="match status" value="1"/>
</dbReference>
<dbReference type="PROSITE" id="PS00237">
    <property type="entry name" value="G_PROTEIN_RECEP_F1_1"/>
    <property type="match status" value="1"/>
</dbReference>
<dbReference type="PROSITE" id="PS50262">
    <property type="entry name" value="G_PROTEIN_RECEP_F1_2"/>
    <property type="match status" value="1"/>
</dbReference>
<proteinExistence type="inferred from homology"/>
<accession>Q8NGW1</accession>
<accession>Q6IFH3</accession>
<keyword id="KW-1003">Cell membrane</keyword>
<keyword id="KW-1015">Disulfide bond</keyword>
<keyword id="KW-0297">G-protein coupled receptor</keyword>
<keyword id="KW-0325">Glycoprotein</keyword>
<keyword id="KW-0472">Membrane</keyword>
<keyword id="KW-0552">Olfaction</keyword>
<keyword id="KW-0675">Receptor</keyword>
<keyword id="KW-1185">Reference proteome</keyword>
<keyword id="KW-0716">Sensory transduction</keyword>
<keyword id="KW-0807">Transducer</keyword>
<keyword id="KW-0812">Transmembrane</keyword>
<keyword id="KW-1133">Transmembrane helix</keyword>
<name>OR6B3_HUMAN</name>
<feature type="chain" id="PRO_0000150622" description="Olfactory receptor 6B3">
    <location>
        <begin position="1"/>
        <end position="331"/>
    </location>
</feature>
<feature type="topological domain" description="Extracellular" evidence="1">
    <location>
        <begin position="1"/>
        <end position="25"/>
    </location>
</feature>
<feature type="transmembrane region" description="Helical; Name=1" evidence="1">
    <location>
        <begin position="26"/>
        <end position="46"/>
    </location>
</feature>
<feature type="topological domain" description="Cytoplasmic" evidence="1">
    <location>
        <begin position="47"/>
        <end position="54"/>
    </location>
</feature>
<feature type="transmembrane region" description="Helical; Name=2" evidence="1">
    <location>
        <begin position="55"/>
        <end position="75"/>
    </location>
</feature>
<feature type="topological domain" description="Extracellular" evidence="1">
    <location>
        <begin position="76"/>
        <end position="99"/>
    </location>
</feature>
<feature type="transmembrane region" description="Helical; Name=3" evidence="1">
    <location>
        <begin position="100"/>
        <end position="120"/>
    </location>
</feature>
<feature type="topological domain" description="Cytoplasmic" evidence="1">
    <location>
        <begin position="121"/>
        <end position="139"/>
    </location>
</feature>
<feature type="transmembrane region" description="Helical; Name=4" evidence="1">
    <location>
        <begin position="140"/>
        <end position="160"/>
    </location>
</feature>
<feature type="topological domain" description="Extracellular" evidence="1">
    <location>
        <begin position="161"/>
        <end position="196"/>
    </location>
</feature>
<feature type="transmembrane region" description="Helical; Name=5" evidence="1">
    <location>
        <begin position="197"/>
        <end position="217"/>
    </location>
</feature>
<feature type="topological domain" description="Cytoplasmic" evidence="1">
    <location>
        <begin position="218"/>
        <end position="237"/>
    </location>
</feature>
<feature type="transmembrane region" description="Helical; Name=6" evidence="1">
    <location>
        <begin position="238"/>
        <end position="258"/>
    </location>
</feature>
<feature type="topological domain" description="Extracellular" evidence="1">
    <location>
        <begin position="259"/>
        <end position="271"/>
    </location>
</feature>
<feature type="transmembrane region" description="Helical; Name=7" evidence="1">
    <location>
        <begin position="272"/>
        <end position="292"/>
    </location>
</feature>
<feature type="topological domain" description="Cytoplasmic" evidence="1">
    <location>
        <begin position="293"/>
        <end position="331"/>
    </location>
</feature>
<feature type="glycosylation site" description="N-linked (GlcNAc...) asparagine" evidence="1">
    <location>
        <position position="5"/>
    </location>
</feature>
<feature type="disulfide bond" evidence="2">
    <location>
        <begin position="97"/>
        <end position="189"/>
    </location>
</feature>
<feature type="sequence variant" id="VAR_062049" description="In dbSNP:rs12465491.">
    <original>C</original>
    <variation>Y</variation>
    <location>
        <position position="234"/>
    </location>
</feature>